<reference key="1">
    <citation type="submission" date="2008-05" db="EMBL/GenBank/DDBJ databases">
        <title>Complete sequence of Chlorobium limicola DSM 245.</title>
        <authorList>
            <consortium name="US DOE Joint Genome Institute"/>
            <person name="Lucas S."/>
            <person name="Copeland A."/>
            <person name="Lapidus A."/>
            <person name="Glavina del Rio T."/>
            <person name="Dalin E."/>
            <person name="Tice H."/>
            <person name="Bruce D."/>
            <person name="Goodwin L."/>
            <person name="Pitluck S."/>
            <person name="Schmutz J."/>
            <person name="Larimer F."/>
            <person name="Land M."/>
            <person name="Hauser L."/>
            <person name="Kyrpides N."/>
            <person name="Ovchinnikova G."/>
            <person name="Zhao F."/>
            <person name="Li T."/>
            <person name="Liu Z."/>
            <person name="Overmann J."/>
            <person name="Bryant D.A."/>
            <person name="Richardson P."/>
        </authorList>
    </citation>
    <scope>NUCLEOTIDE SEQUENCE [LARGE SCALE GENOMIC DNA]</scope>
    <source>
        <strain>DSM 245 / NBRC 103803 / 6330</strain>
    </source>
</reference>
<gene>
    <name evidence="1" type="primary">pnp</name>
    <name type="ordered locus">Clim_0599</name>
</gene>
<sequence>MISMIINKAIDLGQGKIISIETGKMAKQADGSVVVRLGDTMVLATVVSSKKTPPPNQDYFPLQVEYREKYSAAGKFPGGFFKRESRPSEKEILSARLIDRALRPLFPDGYLFETQIIVTVISSDQINDADVLGGLAASAAIMVSDIPFHNAMSEVRVGRINGKFIINPDVNELVNSDLDICIGGTTDTICMLEGEMKEISEAEMLDAIKFGHDAIRRLCALQNEIAAEVAKPARPFAPAVIPSELTDLVRGLCETRLRELAYTPLRKEDRAEQTAAIYREIIQSTVEHFKAAISPEEIQADPSKALCLNEHIIDEQIHAVEKKVMRHMILDDAKRLDGRTLEEVRPISIELGIIPRAHGSALFTRGETQALVTITLGTKKDAQSVDNLTNNADKKFMLHYNFPPFSVGETGRIGSTGRREIGHGNLAERAIKMVAPPEQEFPYTVRIVSDILESNGSSSMASVCGGTLALMDGGVPIRKPVSGIAMGLIKEGSNYAVLSDILGNEDHLGDMDFKVSGTRDGITACQMDIKIDGLDYHILESALEQARRGRLHILDKMEEAIPSARVELAQFAPRLTTIQVPVDAIGLIIGKGGETIRSITEETGAEINIEDDGTVTIACSSVEGTHAALATIKTLLAKPEVGTIYLGKVRDVRDELGAFVEFLPKTDGLVHISEISATERVAKVSDHLKIGDRIKVKLVDVRKDPRTGKTRFALSMRAVETDAANGAPQENNQENQ</sequence>
<accession>B3EH06</accession>
<organism>
    <name type="scientific">Chlorobium limicola (strain DSM 245 / NBRC 103803 / 6330)</name>
    <dbReference type="NCBI Taxonomy" id="290315"/>
    <lineage>
        <taxon>Bacteria</taxon>
        <taxon>Pseudomonadati</taxon>
        <taxon>Chlorobiota</taxon>
        <taxon>Chlorobiia</taxon>
        <taxon>Chlorobiales</taxon>
        <taxon>Chlorobiaceae</taxon>
        <taxon>Chlorobium/Pelodictyon group</taxon>
        <taxon>Chlorobium</taxon>
    </lineage>
</organism>
<evidence type="ECO:0000255" key="1">
    <source>
        <dbReference type="HAMAP-Rule" id="MF_01595"/>
    </source>
</evidence>
<protein>
    <recommendedName>
        <fullName evidence="1">Polyribonucleotide nucleotidyltransferase</fullName>
        <ecNumber evidence="1">2.7.7.8</ecNumber>
    </recommendedName>
    <alternativeName>
        <fullName evidence="1">Polynucleotide phosphorylase</fullName>
        <shortName evidence="1">PNPase</shortName>
    </alternativeName>
</protein>
<dbReference type="EC" id="2.7.7.8" evidence="1"/>
<dbReference type="EMBL" id="CP001097">
    <property type="protein sequence ID" value="ACD89686.1"/>
    <property type="molecule type" value="Genomic_DNA"/>
</dbReference>
<dbReference type="SMR" id="B3EH06"/>
<dbReference type="STRING" id="290315.Clim_0599"/>
<dbReference type="KEGG" id="cli:Clim_0599"/>
<dbReference type="eggNOG" id="COG1185">
    <property type="taxonomic scope" value="Bacteria"/>
</dbReference>
<dbReference type="HOGENOM" id="CLU_004217_2_2_10"/>
<dbReference type="Proteomes" id="UP000008841">
    <property type="component" value="Chromosome"/>
</dbReference>
<dbReference type="GO" id="GO:0005829">
    <property type="term" value="C:cytosol"/>
    <property type="evidence" value="ECO:0007669"/>
    <property type="project" value="TreeGrafter"/>
</dbReference>
<dbReference type="GO" id="GO:0000175">
    <property type="term" value="F:3'-5'-RNA exonuclease activity"/>
    <property type="evidence" value="ECO:0007669"/>
    <property type="project" value="TreeGrafter"/>
</dbReference>
<dbReference type="GO" id="GO:0000287">
    <property type="term" value="F:magnesium ion binding"/>
    <property type="evidence" value="ECO:0007669"/>
    <property type="project" value="UniProtKB-UniRule"/>
</dbReference>
<dbReference type="GO" id="GO:0004654">
    <property type="term" value="F:polyribonucleotide nucleotidyltransferase activity"/>
    <property type="evidence" value="ECO:0007669"/>
    <property type="project" value="UniProtKB-UniRule"/>
</dbReference>
<dbReference type="GO" id="GO:0003723">
    <property type="term" value="F:RNA binding"/>
    <property type="evidence" value="ECO:0007669"/>
    <property type="project" value="UniProtKB-UniRule"/>
</dbReference>
<dbReference type="GO" id="GO:0006402">
    <property type="term" value="P:mRNA catabolic process"/>
    <property type="evidence" value="ECO:0007669"/>
    <property type="project" value="UniProtKB-UniRule"/>
</dbReference>
<dbReference type="GO" id="GO:0006396">
    <property type="term" value="P:RNA processing"/>
    <property type="evidence" value="ECO:0007669"/>
    <property type="project" value="InterPro"/>
</dbReference>
<dbReference type="CDD" id="cd02393">
    <property type="entry name" value="KH-I_PNPase"/>
    <property type="match status" value="1"/>
</dbReference>
<dbReference type="CDD" id="cd11363">
    <property type="entry name" value="RNase_PH_PNPase_1"/>
    <property type="match status" value="1"/>
</dbReference>
<dbReference type="CDD" id="cd11364">
    <property type="entry name" value="RNase_PH_PNPase_2"/>
    <property type="match status" value="1"/>
</dbReference>
<dbReference type="FunFam" id="3.30.1370.10:FF:000001">
    <property type="entry name" value="Polyribonucleotide nucleotidyltransferase"/>
    <property type="match status" value="1"/>
</dbReference>
<dbReference type="FunFam" id="3.30.230.70:FF:000001">
    <property type="entry name" value="Polyribonucleotide nucleotidyltransferase"/>
    <property type="match status" value="1"/>
</dbReference>
<dbReference type="FunFam" id="3.30.230.70:FF:000002">
    <property type="entry name" value="Polyribonucleotide nucleotidyltransferase"/>
    <property type="match status" value="1"/>
</dbReference>
<dbReference type="Gene3D" id="3.30.230.70">
    <property type="entry name" value="GHMP Kinase, N-terminal domain"/>
    <property type="match status" value="2"/>
</dbReference>
<dbReference type="Gene3D" id="3.30.1370.10">
    <property type="entry name" value="K Homology domain, type 1"/>
    <property type="match status" value="1"/>
</dbReference>
<dbReference type="Gene3D" id="2.40.50.140">
    <property type="entry name" value="Nucleic acid-binding proteins"/>
    <property type="match status" value="1"/>
</dbReference>
<dbReference type="HAMAP" id="MF_01595">
    <property type="entry name" value="PNPase"/>
    <property type="match status" value="1"/>
</dbReference>
<dbReference type="InterPro" id="IPR001247">
    <property type="entry name" value="ExoRNase_PH_dom1"/>
</dbReference>
<dbReference type="InterPro" id="IPR015847">
    <property type="entry name" value="ExoRNase_PH_dom2"/>
</dbReference>
<dbReference type="InterPro" id="IPR036345">
    <property type="entry name" value="ExoRNase_PH_dom2_sf"/>
</dbReference>
<dbReference type="InterPro" id="IPR004087">
    <property type="entry name" value="KH_dom"/>
</dbReference>
<dbReference type="InterPro" id="IPR004088">
    <property type="entry name" value="KH_dom_type_1"/>
</dbReference>
<dbReference type="InterPro" id="IPR036612">
    <property type="entry name" value="KH_dom_type_1_sf"/>
</dbReference>
<dbReference type="InterPro" id="IPR012340">
    <property type="entry name" value="NA-bd_OB-fold"/>
</dbReference>
<dbReference type="InterPro" id="IPR012162">
    <property type="entry name" value="PNPase"/>
</dbReference>
<dbReference type="InterPro" id="IPR027408">
    <property type="entry name" value="PNPase/RNase_PH_dom_sf"/>
</dbReference>
<dbReference type="InterPro" id="IPR015848">
    <property type="entry name" value="PNPase_PH_RNA-bd_bac/org-type"/>
</dbReference>
<dbReference type="InterPro" id="IPR020568">
    <property type="entry name" value="Ribosomal_Su5_D2-typ_SF"/>
</dbReference>
<dbReference type="InterPro" id="IPR003029">
    <property type="entry name" value="S1_domain"/>
</dbReference>
<dbReference type="NCBIfam" id="TIGR03591">
    <property type="entry name" value="polynuc_phos"/>
    <property type="match status" value="1"/>
</dbReference>
<dbReference type="NCBIfam" id="NF008805">
    <property type="entry name" value="PRK11824.1"/>
    <property type="match status" value="1"/>
</dbReference>
<dbReference type="PANTHER" id="PTHR11252">
    <property type="entry name" value="POLYRIBONUCLEOTIDE NUCLEOTIDYLTRANSFERASE"/>
    <property type="match status" value="1"/>
</dbReference>
<dbReference type="PANTHER" id="PTHR11252:SF0">
    <property type="entry name" value="POLYRIBONUCLEOTIDE NUCLEOTIDYLTRANSFERASE 1, MITOCHONDRIAL"/>
    <property type="match status" value="1"/>
</dbReference>
<dbReference type="Pfam" id="PF00013">
    <property type="entry name" value="KH_1"/>
    <property type="match status" value="1"/>
</dbReference>
<dbReference type="Pfam" id="PF03726">
    <property type="entry name" value="PNPase"/>
    <property type="match status" value="1"/>
</dbReference>
<dbReference type="Pfam" id="PF01138">
    <property type="entry name" value="RNase_PH"/>
    <property type="match status" value="2"/>
</dbReference>
<dbReference type="Pfam" id="PF03725">
    <property type="entry name" value="RNase_PH_C"/>
    <property type="match status" value="2"/>
</dbReference>
<dbReference type="Pfam" id="PF00575">
    <property type="entry name" value="S1"/>
    <property type="match status" value="1"/>
</dbReference>
<dbReference type="PIRSF" id="PIRSF005499">
    <property type="entry name" value="PNPase"/>
    <property type="match status" value="1"/>
</dbReference>
<dbReference type="SMART" id="SM00322">
    <property type="entry name" value="KH"/>
    <property type="match status" value="1"/>
</dbReference>
<dbReference type="SMART" id="SM00316">
    <property type="entry name" value="S1"/>
    <property type="match status" value="1"/>
</dbReference>
<dbReference type="SUPFAM" id="SSF54791">
    <property type="entry name" value="Eukaryotic type KH-domain (KH-domain type I)"/>
    <property type="match status" value="1"/>
</dbReference>
<dbReference type="SUPFAM" id="SSF50249">
    <property type="entry name" value="Nucleic acid-binding proteins"/>
    <property type="match status" value="1"/>
</dbReference>
<dbReference type="SUPFAM" id="SSF55666">
    <property type="entry name" value="Ribonuclease PH domain 2-like"/>
    <property type="match status" value="2"/>
</dbReference>
<dbReference type="SUPFAM" id="SSF54211">
    <property type="entry name" value="Ribosomal protein S5 domain 2-like"/>
    <property type="match status" value="2"/>
</dbReference>
<dbReference type="PROSITE" id="PS50084">
    <property type="entry name" value="KH_TYPE_1"/>
    <property type="match status" value="1"/>
</dbReference>
<dbReference type="PROSITE" id="PS50126">
    <property type="entry name" value="S1"/>
    <property type="match status" value="1"/>
</dbReference>
<name>PNP_CHLL2</name>
<comment type="function">
    <text evidence="1">Involved in mRNA degradation. Catalyzes the phosphorolysis of single-stranded polyribonucleotides processively in the 3'- to 5'-direction.</text>
</comment>
<comment type="catalytic activity">
    <reaction evidence="1">
        <text>RNA(n+1) + phosphate = RNA(n) + a ribonucleoside 5'-diphosphate</text>
        <dbReference type="Rhea" id="RHEA:22096"/>
        <dbReference type="Rhea" id="RHEA-COMP:14527"/>
        <dbReference type="Rhea" id="RHEA-COMP:17342"/>
        <dbReference type="ChEBI" id="CHEBI:43474"/>
        <dbReference type="ChEBI" id="CHEBI:57930"/>
        <dbReference type="ChEBI" id="CHEBI:140395"/>
        <dbReference type="EC" id="2.7.7.8"/>
    </reaction>
</comment>
<comment type="cofactor">
    <cofactor evidence="1">
        <name>Mg(2+)</name>
        <dbReference type="ChEBI" id="CHEBI:18420"/>
    </cofactor>
</comment>
<comment type="subcellular location">
    <subcellularLocation>
        <location evidence="1">Cytoplasm</location>
    </subcellularLocation>
</comment>
<comment type="similarity">
    <text evidence="1">Belongs to the polyribonucleotide nucleotidyltransferase family.</text>
</comment>
<keyword id="KW-0963">Cytoplasm</keyword>
<keyword id="KW-0460">Magnesium</keyword>
<keyword id="KW-0479">Metal-binding</keyword>
<keyword id="KW-0548">Nucleotidyltransferase</keyword>
<keyword id="KW-0694">RNA-binding</keyword>
<keyword id="KW-0808">Transferase</keyword>
<proteinExistence type="inferred from homology"/>
<feature type="chain" id="PRO_0000381873" description="Polyribonucleotide nucleotidyltransferase">
    <location>
        <begin position="1"/>
        <end position="736"/>
    </location>
</feature>
<feature type="domain" description="KH" evidence="1">
    <location>
        <begin position="573"/>
        <end position="632"/>
    </location>
</feature>
<feature type="domain" description="S1 motif" evidence="1">
    <location>
        <begin position="642"/>
        <end position="717"/>
    </location>
</feature>
<feature type="binding site" evidence="1">
    <location>
        <position position="506"/>
    </location>
    <ligand>
        <name>Mg(2+)</name>
        <dbReference type="ChEBI" id="CHEBI:18420"/>
    </ligand>
</feature>
<feature type="binding site" evidence="1">
    <location>
        <position position="512"/>
    </location>
    <ligand>
        <name>Mg(2+)</name>
        <dbReference type="ChEBI" id="CHEBI:18420"/>
    </ligand>
</feature>